<evidence type="ECO:0000269" key="1">
    <source>
    </source>
</evidence>
<evidence type="ECO:0000269" key="2">
    <source>
    </source>
</evidence>
<evidence type="ECO:0000305" key="3"/>
<accession>Q8NHZ7</accession>
<comment type="function">
    <text evidence="2">May displace the NuRD complex from chromatin.</text>
</comment>
<comment type="subunit">
    <text evidence="2">Interacts (via N-terminus) with MBD3; the interaction is direct (PubMed:15701600). Interacts with MTA1 (PubMed:15701600). Interacts with HDAC1 (PubMed:15701600). Interacts with HDAC2 (PubMed:15701600). Interacts with RBBP4 (PubMed:15701600). Interacts with RBBP7 (PubMed:15701600).</text>
</comment>
<comment type="interaction">
    <interactant intactId="EBI-11989378">
        <id>Q8NHZ7</id>
    </interactant>
    <interactant intactId="EBI-5916454">
        <id>A6NEM1</id>
        <label>GOLGA6L9</label>
    </interactant>
    <organismsDiffer>false</organismsDiffer>
    <experiments>3</experiments>
</comment>
<comment type="interaction">
    <interactant intactId="EBI-11989378">
        <id>Q8NHZ7</id>
    </interactant>
    <interactant intactId="EBI-473189">
        <id>Q96D09</id>
        <label>GPRASP2</label>
    </interactant>
    <organismsDiffer>false</organismsDiffer>
    <experiments>3</experiments>
</comment>
<comment type="interaction">
    <interactant intactId="EBI-11989378">
        <id>Q8NHZ7</id>
    </interactant>
    <interactant intactId="EBI-3044087">
        <id>Q7Z3Y8</id>
        <label>KRT27</label>
    </interactant>
    <organismsDiffer>false</organismsDiffer>
    <experiments>3</experiments>
</comment>
<comment type="interaction">
    <interactant intactId="EBI-11989378">
        <id>Q8NHZ7</id>
    </interactant>
    <interactant intactId="EBI-1047093">
        <id>O76011</id>
        <label>KRT34</label>
    </interactant>
    <organismsDiffer>false</organismsDiffer>
    <experiments>3</experiments>
</comment>
<comment type="interaction">
    <interactant intactId="EBI-11989378">
        <id>Q8NHZ7</id>
    </interactant>
    <interactant intactId="EBI-22311199">
        <id>Q3LI67</id>
        <label>KRTAP6-3</label>
    </interactant>
    <organismsDiffer>false</organismsDiffer>
    <experiments>3</experiments>
</comment>
<comment type="interaction">
    <interactant intactId="EBI-11989378">
        <id>Q8NHZ7</id>
    </interactant>
    <interactant intactId="EBI-724076">
        <id>Q99750</id>
        <label>MDFI</label>
    </interactant>
    <organismsDiffer>false</organismsDiffer>
    <experiments>3</experiments>
</comment>
<comment type="interaction">
    <interactant intactId="EBI-11989378">
        <id>Q8NHZ7</id>
    </interactant>
    <interactant intactId="EBI-11957366">
        <id>Q59EK9-3</id>
        <label>RUNDC3A</label>
    </interactant>
    <organismsDiffer>false</organismsDiffer>
    <experiments>3</experiments>
</comment>
<comment type="interaction">
    <interactant intactId="EBI-11989378">
        <id>Q8NHZ7</id>
    </interactant>
    <interactant intactId="EBI-17181801">
        <id>P0C264</id>
        <label>SBK3</label>
    </interactant>
    <organismsDiffer>false</organismsDiffer>
    <experiments>3</experiments>
</comment>
<comment type="interaction">
    <interactant intactId="EBI-11989378">
        <id>Q8NHZ7</id>
    </interactant>
    <interactant intactId="EBI-11059915">
        <id>Q8N7C3</id>
        <label>TRIML2</label>
    </interactant>
    <organismsDiffer>false</organismsDiffer>
    <experiments>3</experiments>
</comment>
<comment type="subcellular location">
    <subcellularLocation>
        <location evidence="2">Nucleus</location>
    </subcellularLocation>
</comment>
<comment type="tissue specificity">
    <text evidence="1 2">Detected at low levels in several somatic tissues (PubMed:12504854, PubMed:15701600). Highly expressed in the ovarian teratocarcinoma cell line PA-1 (PubMed:12504854).</text>
</comment>
<comment type="miscellaneous">
    <text>The MBD3L proteins are encoded by strongly repeated regions of the 19p13 chromosome. The exact number of functional copies is unclear, and some of them may represent pseudogenes.</text>
</comment>
<comment type="similarity">
    <text evidence="3">Belongs to the MBD3L family.</text>
</comment>
<comment type="sequence caution" evidence="3">
    <conflict type="frameshift">
        <sequence resource="EMBL-CDS" id="AAM28154"/>
    </conflict>
</comment>
<gene>
    <name type="primary">MBD3L2</name>
</gene>
<dbReference type="EMBL" id="AF503919">
    <property type="protein sequence ID" value="AAM28154.2"/>
    <property type="status" value="ALT_FRAME"/>
    <property type="molecule type" value="mRNA"/>
</dbReference>
<dbReference type="EMBL" id="AC010606">
    <property type="status" value="NOT_ANNOTATED_CDS"/>
    <property type="molecule type" value="Genomic_DNA"/>
</dbReference>
<dbReference type="EMBL" id="BE502398">
    <property type="status" value="NOT_ANNOTATED_CDS"/>
    <property type="molecule type" value="mRNA"/>
</dbReference>
<dbReference type="CCDS" id="CCDS42483.1"/>
<dbReference type="RefSeq" id="NP_653215.2">
    <property type="nucleotide sequence ID" value="NM_144614.4"/>
</dbReference>
<dbReference type="SMR" id="Q8NHZ7"/>
<dbReference type="BioGRID" id="125944">
    <property type="interactions" value="54"/>
</dbReference>
<dbReference type="FunCoup" id="Q8NHZ7">
    <property type="interactions" value="31"/>
</dbReference>
<dbReference type="IntAct" id="Q8NHZ7">
    <property type="interactions" value="37"/>
</dbReference>
<dbReference type="STRING" id="9606.ENSP00000370800"/>
<dbReference type="GlyGen" id="Q8NHZ7">
    <property type="glycosylation" value="2 sites"/>
</dbReference>
<dbReference type="BioMuta" id="MBD3L2"/>
<dbReference type="MassIVE" id="Q8NHZ7"/>
<dbReference type="PaxDb" id="9606-ENSP00000370800"/>
<dbReference type="PeptideAtlas" id="Q8NHZ7"/>
<dbReference type="Antibodypedia" id="68491">
    <property type="antibodies" value="63 antibodies from 10 providers"/>
</dbReference>
<dbReference type="DNASU" id="125997"/>
<dbReference type="Ensembl" id="ENST00000381393.3">
    <property type="protein sequence ID" value="ENSP00000370800.2"/>
    <property type="gene ID" value="ENSG00000230522.5"/>
</dbReference>
<dbReference type="GeneID" id="125997"/>
<dbReference type="KEGG" id="hsa:125997"/>
<dbReference type="MANE-Select" id="ENST00000381393.3">
    <property type="protein sequence ID" value="ENSP00000370800.2"/>
    <property type="RefSeq nucleotide sequence ID" value="NM_144614.4"/>
    <property type="RefSeq protein sequence ID" value="NP_653215.2"/>
</dbReference>
<dbReference type="UCSC" id="uc010dvf.2">
    <property type="organism name" value="human"/>
</dbReference>
<dbReference type="AGR" id="HGNC:18532"/>
<dbReference type="CTD" id="125997"/>
<dbReference type="DisGeNET" id="125997"/>
<dbReference type="GeneCards" id="MBD3L2"/>
<dbReference type="HGNC" id="HGNC:18532">
    <property type="gene designation" value="MBD3L2"/>
</dbReference>
<dbReference type="HPA" id="ENSG00000230522">
    <property type="expression patterns" value="Not detected"/>
</dbReference>
<dbReference type="MIM" id="607964">
    <property type="type" value="gene"/>
</dbReference>
<dbReference type="neXtProt" id="NX_Q8NHZ7"/>
<dbReference type="OpenTargets" id="ENSG00000230522"/>
<dbReference type="PharmGKB" id="PA38567"/>
<dbReference type="VEuPathDB" id="HostDB:ENSG00000230522"/>
<dbReference type="eggNOG" id="KOG4161">
    <property type="taxonomic scope" value="Eukaryota"/>
</dbReference>
<dbReference type="GeneTree" id="ENSGT00950000183005"/>
<dbReference type="InParanoid" id="Q8NHZ7"/>
<dbReference type="OMA" id="YNERERT"/>
<dbReference type="OrthoDB" id="13533at9604"/>
<dbReference type="PAN-GO" id="Q8NHZ7">
    <property type="GO annotations" value="0 GO annotations based on evolutionary models"/>
</dbReference>
<dbReference type="PhylomeDB" id="Q8NHZ7"/>
<dbReference type="TreeFam" id="TF325032"/>
<dbReference type="PathwayCommons" id="Q8NHZ7"/>
<dbReference type="SignaLink" id="Q8NHZ7"/>
<dbReference type="BioGRID-ORCS" id="125997">
    <property type="hits" value="56 hits in 673 CRISPR screens"/>
</dbReference>
<dbReference type="GenomeRNAi" id="125997"/>
<dbReference type="Pharos" id="Q8NHZ7">
    <property type="development level" value="Tdark"/>
</dbReference>
<dbReference type="PRO" id="PR:Q8NHZ7"/>
<dbReference type="Proteomes" id="UP000005640">
    <property type="component" value="Chromosome 19"/>
</dbReference>
<dbReference type="RNAct" id="Q8NHZ7">
    <property type="molecule type" value="protein"/>
</dbReference>
<dbReference type="Bgee" id="ENSG00000230522">
    <property type="expression patterns" value="Expressed in male germ line stem cell (sensu Vertebrata) in testis and 3 other cell types or tissues"/>
</dbReference>
<dbReference type="GO" id="GO:0005634">
    <property type="term" value="C:nucleus"/>
    <property type="evidence" value="ECO:0000314"/>
    <property type="project" value="UniProtKB"/>
</dbReference>
<dbReference type="GO" id="GO:0008327">
    <property type="term" value="F:methyl-CpG binding"/>
    <property type="evidence" value="ECO:0000318"/>
    <property type="project" value="GO_Central"/>
</dbReference>
<dbReference type="GO" id="GO:0006346">
    <property type="term" value="P:DNA methylation-dependent constitutive heterochromatin formation"/>
    <property type="evidence" value="ECO:0000318"/>
    <property type="project" value="GO_Central"/>
</dbReference>
<dbReference type="GO" id="GO:0000122">
    <property type="term" value="P:negative regulation of transcription by RNA polymerase II"/>
    <property type="evidence" value="ECO:0000318"/>
    <property type="project" value="GO_Central"/>
</dbReference>
<dbReference type="GO" id="GO:1902275">
    <property type="term" value="P:regulation of chromatin organization"/>
    <property type="evidence" value="ECO:0000314"/>
    <property type="project" value="UniProtKB"/>
</dbReference>
<dbReference type="GO" id="GO:0006357">
    <property type="term" value="P:regulation of transcription by RNA polymerase II"/>
    <property type="evidence" value="ECO:0000314"/>
    <property type="project" value="UniProtKB"/>
</dbReference>
<dbReference type="InterPro" id="IPR032343">
    <property type="entry name" value="MBD2/MBD3_p55-bd"/>
</dbReference>
<dbReference type="InterPro" id="IPR025884">
    <property type="entry name" value="MeCpG-bd_2/3_C_dom"/>
</dbReference>
<dbReference type="Pfam" id="PF14048">
    <property type="entry name" value="MBD_C"/>
    <property type="match status" value="1"/>
</dbReference>
<dbReference type="Pfam" id="PF16564">
    <property type="entry name" value="MBDa"/>
    <property type="match status" value="1"/>
</dbReference>
<sequence>MGEPAFTSFPSLPVLGKLKRNMMPWALQKKREIHMAKAHRRRAARSALPMRLTSCIFRRPVTRIRSHPDNQVRRRKGDEHLEKPQQLCAYRRLQALQPCSSQGEGSSPLHLESVLSILAPGTAGESLDRAGAERVRSPLEPTPGRFPAVAGGPTPGMGCQLPPPLSGQLVTPADIRRQARRVKKARERLAKALQADRLARRAEMLTGG</sequence>
<organism>
    <name type="scientific">Homo sapiens</name>
    <name type="common">Human</name>
    <dbReference type="NCBI Taxonomy" id="9606"/>
    <lineage>
        <taxon>Eukaryota</taxon>
        <taxon>Metazoa</taxon>
        <taxon>Chordata</taxon>
        <taxon>Craniata</taxon>
        <taxon>Vertebrata</taxon>
        <taxon>Euteleostomi</taxon>
        <taxon>Mammalia</taxon>
        <taxon>Eutheria</taxon>
        <taxon>Euarchontoglires</taxon>
        <taxon>Primates</taxon>
        <taxon>Haplorrhini</taxon>
        <taxon>Catarrhini</taxon>
        <taxon>Hominidae</taxon>
        <taxon>Homo</taxon>
    </lineage>
</organism>
<protein>
    <recommendedName>
        <fullName>Methyl-CpG-binding domain protein 3-like 2</fullName>
        <shortName>MBD3-like protein 2</shortName>
    </recommendedName>
</protein>
<proteinExistence type="evidence at protein level"/>
<feature type="chain" id="PRO_0000096253" description="Methyl-CpG-binding domain protein 3-like 2">
    <location>
        <begin position="1"/>
        <end position="208"/>
    </location>
</feature>
<feature type="region of interest" description="Interacts with MBD3" evidence="2">
    <location>
        <begin position="1"/>
        <end position="89"/>
    </location>
</feature>
<feature type="sequence conflict" description="In Ref. 1; AAM28154 and 3; BE502398." evidence="3" ref="1 3">
    <original>G</original>
    <variation>S</variation>
    <location>
        <position position="124"/>
    </location>
</feature>
<feature type="sequence conflict" description="In Ref. 1; AAM28154." evidence="3" ref="1">
    <original>GG</original>
    <variation>CR</variation>
    <location>
        <begin position="207"/>
        <end position="208"/>
    </location>
</feature>
<keyword id="KW-0539">Nucleus</keyword>
<keyword id="KW-1185">Reference proteome</keyword>
<name>MB3L2_HUMAN</name>
<reference key="1">
    <citation type="journal article" date="2002" name="Genomics">
        <title>MBD3L1 and MBD3L2, two new proteins homologous to the methyl-CpG-binding proteins MBD2 and MBD3: characterization of MBD3L1 as a testis-specific transcriptional repressor.</title>
        <authorList>
            <person name="Jiang C.-L."/>
            <person name="Jin S.-G."/>
            <person name="Lee D.-H."/>
            <person name="Lan Z.-J."/>
            <person name="Xu X."/>
            <person name="O'Connor T.R."/>
            <person name="Szabo P.E."/>
            <person name="Mann J.R."/>
            <person name="Cooney A.J."/>
            <person name="Pfeifer G.P."/>
        </authorList>
    </citation>
    <scope>NUCLEOTIDE SEQUENCE [MRNA]</scope>
    <scope>TISSUE SPECIFICITY</scope>
</reference>
<reference key="2">
    <citation type="journal article" date="2004" name="Nature">
        <title>The DNA sequence and biology of human chromosome 19.</title>
        <authorList>
            <person name="Grimwood J."/>
            <person name="Gordon L.A."/>
            <person name="Olsen A.S."/>
            <person name="Terry A."/>
            <person name="Schmutz J."/>
            <person name="Lamerdin J.E."/>
            <person name="Hellsten U."/>
            <person name="Goodstein D."/>
            <person name="Couronne O."/>
            <person name="Tran-Gyamfi M."/>
            <person name="Aerts A."/>
            <person name="Altherr M."/>
            <person name="Ashworth L."/>
            <person name="Bajorek E."/>
            <person name="Black S."/>
            <person name="Branscomb E."/>
            <person name="Caenepeel S."/>
            <person name="Carrano A.V."/>
            <person name="Caoile C."/>
            <person name="Chan Y.M."/>
            <person name="Christensen M."/>
            <person name="Cleland C.A."/>
            <person name="Copeland A."/>
            <person name="Dalin E."/>
            <person name="Dehal P."/>
            <person name="Denys M."/>
            <person name="Detter J.C."/>
            <person name="Escobar J."/>
            <person name="Flowers D."/>
            <person name="Fotopulos D."/>
            <person name="Garcia C."/>
            <person name="Georgescu A.M."/>
            <person name="Glavina T."/>
            <person name="Gomez M."/>
            <person name="Gonzales E."/>
            <person name="Groza M."/>
            <person name="Hammon N."/>
            <person name="Hawkins T."/>
            <person name="Haydu L."/>
            <person name="Ho I."/>
            <person name="Huang W."/>
            <person name="Israni S."/>
            <person name="Jett J."/>
            <person name="Kadner K."/>
            <person name="Kimball H."/>
            <person name="Kobayashi A."/>
            <person name="Larionov V."/>
            <person name="Leem S.-H."/>
            <person name="Lopez F."/>
            <person name="Lou Y."/>
            <person name="Lowry S."/>
            <person name="Malfatti S."/>
            <person name="Martinez D."/>
            <person name="McCready P.M."/>
            <person name="Medina C."/>
            <person name="Morgan J."/>
            <person name="Nelson K."/>
            <person name="Nolan M."/>
            <person name="Ovcharenko I."/>
            <person name="Pitluck S."/>
            <person name="Pollard M."/>
            <person name="Popkie A.P."/>
            <person name="Predki P."/>
            <person name="Quan G."/>
            <person name="Ramirez L."/>
            <person name="Rash S."/>
            <person name="Retterer J."/>
            <person name="Rodriguez A."/>
            <person name="Rogers S."/>
            <person name="Salamov A."/>
            <person name="Salazar A."/>
            <person name="She X."/>
            <person name="Smith D."/>
            <person name="Slezak T."/>
            <person name="Solovyev V."/>
            <person name="Thayer N."/>
            <person name="Tice H."/>
            <person name="Tsai M."/>
            <person name="Ustaszewska A."/>
            <person name="Vo N."/>
            <person name="Wagner M."/>
            <person name="Wheeler J."/>
            <person name="Wu K."/>
            <person name="Xie G."/>
            <person name="Yang J."/>
            <person name="Dubchak I."/>
            <person name="Furey T.S."/>
            <person name="DeJong P."/>
            <person name="Dickson M."/>
            <person name="Gordon D."/>
            <person name="Eichler E.E."/>
            <person name="Pennacchio L.A."/>
            <person name="Richardson P."/>
            <person name="Stubbs L."/>
            <person name="Rokhsar D.S."/>
            <person name="Myers R.M."/>
            <person name="Rubin E.M."/>
            <person name="Lucas S.M."/>
        </authorList>
    </citation>
    <scope>NUCLEOTIDE SEQUENCE [LARGE SCALE GENOMIC DNA]</scope>
</reference>
<reference key="3">
    <citation type="journal article" date="2004" name="Genome Res.">
        <title>The status, quality, and expansion of the NIH full-length cDNA project: the Mammalian Gene Collection (MGC).</title>
        <authorList>
            <consortium name="The MGC Project Team"/>
        </authorList>
    </citation>
    <scope>NUCLEOTIDE SEQUENCE [LARGE SCALE MRNA] OF 87-208</scope>
</reference>
<reference key="4">
    <citation type="journal article" date="2005" name="J. Biol. Chem.">
        <title>MBD3L2 interacts with MBD3 and components of the NuRD complex and can oppose MBD2-MeCP1-mediated methylation silencing.</title>
        <authorList>
            <person name="Jin S.-G."/>
            <person name="Jiang C.-L."/>
            <person name="Rauch T."/>
            <person name="Li H."/>
            <person name="Pfeifer G.P."/>
        </authorList>
    </citation>
    <scope>FUNCTION</scope>
    <scope>INTERACTION WITH MBD3; MTA1; HDAC1; HDAC2; RBBP4 AND RBBP7</scope>
    <scope>SUBCELLULAR LOCATION</scope>
    <scope>TISSUE SPECIFICITY</scope>
</reference>